<name>RL28_CLOBK</name>
<keyword id="KW-0687">Ribonucleoprotein</keyword>
<keyword id="KW-0689">Ribosomal protein</keyword>
<comment type="similarity">
    <text evidence="1">Belongs to the bacterial ribosomal protein bL28 family.</text>
</comment>
<accession>B1IIK9</accession>
<feature type="chain" id="PRO_1000121609" description="Large ribosomal subunit protein bL28">
    <location>
        <begin position="1"/>
        <end position="63"/>
    </location>
</feature>
<evidence type="ECO:0000255" key="1">
    <source>
        <dbReference type="HAMAP-Rule" id="MF_00373"/>
    </source>
</evidence>
<evidence type="ECO:0000305" key="2"/>
<protein>
    <recommendedName>
        <fullName evidence="1">Large ribosomal subunit protein bL28</fullName>
    </recommendedName>
    <alternativeName>
        <fullName evidence="2">50S ribosomal protein L28</fullName>
    </alternativeName>
</protein>
<gene>
    <name evidence="1" type="primary">rpmB</name>
    <name type="ordered locus">CLD_2139</name>
</gene>
<dbReference type="EMBL" id="CP000939">
    <property type="protein sequence ID" value="ACA43439.1"/>
    <property type="molecule type" value="Genomic_DNA"/>
</dbReference>
<dbReference type="RefSeq" id="WP_003395976.1">
    <property type="nucleotide sequence ID" value="NC_010516.1"/>
</dbReference>
<dbReference type="SMR" id="B1IIK9"/>
<dbReference type="GeneID" id="92939241"/>
<dbReference type="KEGG" id="cbb:CLD_2139"/>
<dbReference type="HOGENOM" id="CLU_064548_7_0_9"/>
<dbReference type="Proteomes" id="UP000008541">
    <property type="component" value="Chromosome"/>
</dbReference>
<dbReference type="GO" id="GO:1990904">
    <property type="term" value="C:ribonucleoprotein complex"/>
    <property type="evidence" value="ECO:0007669"/>
    <property type="project" value="UniProtKB-KW"/>
</dbReference>
<dbReference type="GO" id="GO:0005840">
    <property type="term" value="C:ribosome"/>
    <property type="evidence" value="ECO:0007669"/>
    <property type="project" value="UniProtKB-KW"/>
</dbReference>
<dbReference type="GO" id="GO:0003735">
    <property type="term" value="F:structural constituent of ribosome"/>
    <property type="evidence" value="ECO:0007669"/>
    <property type="project" value="InterPro"/>
</dbReference>
<dbReference type="GO" id="GO:0006412">
    <property type="term" value="P:translation"/>
    <property type="evidence" value="ECO:0007669"/>
    <property type="project" value="UniProtKB-UniRule"/>
</dbReference>
<dbReference type="Gene3D" id="2.30.170.40">
    <property type="entry name" value="Ribosomal protein L28/L24"/>
    <property type="match status" value="1"/>
</dbReference>
<dbReference type="HAMAP" id="MF_00373">
    <property type="entry name" value="Ribosomal_bL28"/>
    <property type="match status" value="1"/>
</dbReference>
<dbReference type="InterPro" id="IPR050096">
    <property type="entry name" value="Bacterial_rp_bL28"/>
</dbReference>
<dbReference type="InterPro" id="IPR026569">
    <property type="entry name" value="Ribosomal_bL28"/>
</dbReference>
<dbReference type="InterPro" id="IPR034704">
    <property type="entry name" value="Ribosomal_bL28/bL31-like_sf"/>
</dbReference>
<dbReference type="InterPro" id="IPR001383">
    <property type="entry name" value="Ribosomal_bL28_bact-type"/>
</dbReference>
<dbReference type="InterPro" id="IPR037147">
    <property type="entry name" value="Ribosomal_bL28_sf"/>
</dbReference>
<dbReference type="NCBIfam" id="TIGR00009">
    <property type="entry name" value="L28"/>
    <property type="match status" value="1"/>
</dbReference>
<dbReference type="PANTHER" id="PTHR39080">
    <property type="entry name" value="50S RIBOSOMAL PROTEIN L28"/>
    <property type="match status" value="1"/>
</dbReference>
<dbReference type="PANTHER" id="PTHR39080:SF1">
    <property type="entry name" value="LARGE RIBOSOMAL SUBUNIT PROTEIN BL28A"/>
    <property type="match status" value="1"/>
</dbReference>
<dbReference type="Pfam" id="PF00830">
    <property type="entry name" value="Ribosomal_L28"/>
    <property type="match status" value="1"/>
</dbReference>
<dbReference type="SUPFAM" id="SSF143800">
    <property type="entry name" value="L28p-like"/>
    <property type="match status" value="1"/>
</dbReference>
<reference key="1">
    <citation type="journal article" date="2007" name="PLoS ONE">
        <title>Analysis of the neurotoxin complex genes in Clostridium botulinum A1-A4 and B1 strains: BoNT/A3, /Ba4 and /B1 clusters are located within plasmids.</title>
        <authorList>
            <person name="Smith T.J."/>
            <person name="Hill K.K."/>
            <person name="Foley B.T."/>
            <person name="Detter J.C."/>
            <person name="Munk A.C."/>
            <person name="Bruce D.C."/>
            <person name="Doggett N.A."/>
            <person name="Smith L.A."/>
            <person name="Marks J.D."/>
            <person name="Xie G."/>
            <person name="Brettin T.S."/>
        </authorList>
    </citation>
    <scope>NUCLEOTIDE SEQUENCE [LARGE SCALE GENOMIC DNA]</scope>
    <source>
        <strain>Okra / Type B1</strain>
    </source>
</reference>
<sequence>MSRKCEICGKGVVYGVQYSHSHRQSKRSFAPNIKRVKAIVNGTPKRVHVCTRCLRSGKVQRAI</sequence>
<organism>
    <name type="scientific">Clostridium botulinum (strain Okra / Type B1)</name>
    <dbReference type="NCBI Taxonomy" id="498213"/>
    <lineage>
        <taxon>Bacteria</taxon>
        <taxon>Bacillati</taxon>
        <taxon>Bacillota</taxon>
        <taxon>Clostridia</taxon>
        <taxon>Eubacteriales</taxon>
        <taxon>Clostridiaceae</taxon>
        <taxon>Clostridium</taxon>
    </lineage>
</organism>
<proteinExistence type="inferred from homology"/>